<dbReference type="EC" id="4.1.1.37" evidence="1"/>
<dbReference type="EMBL" id="FM211192">
    <property type="protein sequence ID" value="CAR71138.1"/>
    <property type="molecule type" value="Genomic_DNA"/>
</dbReference>
<dbReference type="SMR" id="B8ZQX2"/>
<dbReference type="KEGG" id="mlb:MLBr01043"/>
<dbReference type="HOGENOM" id="CLU_040933_0_1_11"/>
<dbReference type="UniPathway" id="UPA00251">
    <property type="reaction ID" value="UER00321"/>
</dbReference>
<dbReference type="Proteomes" id="UP000006900">
    <property type="component" value="Chromosome"/>
</dbReference>
<dbReference type="GO" id="GO:0005829">
    <property type="term" value="C:cytosol"/>
    <property type="evidence" value="ECO:0007669"/>
    <property type="project" value="TreeGrafter"/>
</dbReference>
<dbReference type="GO" id="GO:0004853">
    <property type="term" value="F:uroporphyrinogen decarboxylase activity"/>
    <property type="evidence" value="ECO:0007669"/>
    <property type="project" value="UniProtKB-UniRule"/>
</dbReference>
<dbReference type="GO" id="GO:0006782">
    <property type="term" value="P:protoporphyrinogen IX biosynthetic process"/>
    <property type="evidence" value="ECO:0007669"/>
    <property type="project" value="UniProtKB-UniRule"/>
</dbReference>
<dbReference type="CDD" id="cd00717">
    <property type="entry name" value="URO-D"/>
    <property type="match status" value="1"/>
</dbReference>
<dbReference type="FunFam" id="3.20.20.210:FF:000007">
    <property type="entry name" value="Uroporphyrinogen decarboxylase"/>
    <property type="match status" value="1"/>
</dbReference>
<dbReference type="Gene3D" id="3.20.20.210">
    <property type="match status" value="1"/>
</dbReference>
<dbReference type="HAMAP" id="MF_00218">
    <property type="entry name" value="URO_D"/>
    <property type="match status" value="1"/>
</dbReference>
<dbReference type="InterPro" id="IPR038071">
    <property type="entry name" value="UROD/MetE-like_sf"/>
</dbReference>
<dbReference type="InterPro" id="IPR006361">
    <property type="entry name" value="Uroporphyrinogen_deCO2ase_HemE"/>
</dbReference>
<dbReference type="InterPro" id="IPR000257">
    <property type="entry name" value="Uroporphyrinogen_deCOase"/>
</dbReference>
<dbReference type="NCBIfam" id="TIGR01464">
    <property type="entry name" value="hemE"/>
    <property type="match status" value="1"/>
</dbReference>
<dbReference type="PANTHER" id="PTHR21091">
    <property type="entry name" value="METHYLTETRAHYDROFOLATE:HOMOCYSTEINE METHYLTRANSFERASE RELATED"/>
    <property type="match status" value="1"/>
</dbReference>
<dbReference type="PANTHER" id="PTHR21091:SF169">
    <property type="entry name" value="UROPORPHYRINOGEN DECARBOXYLASE"/>
    <property type="match status" value="1"/>
</dbReference>
<dbReference type="Pfam" id="PF01208">
    <property type="entry name" value="URO-D"/>
    <property type="match status" value="1"/>
</dbReference>
<dbReference type="SUPFAM" id="SSF51726">
    <property type="entry name" value="UROD/MetE-like"/>
    <property type="match status" value="1"/>
</dbReference>
<dbReference type="PROSITE" id="PS00906">
    <property type="entry name" value="UROD_1"/>
    <property type="match status" value="1"/>
</dbReference>
<dbReference type="PROSITE" id="PS00907">
    <property type="entry name" value="UROD_2"/>
    <property type="match status" value="1"/>
</dbReference>
<protein>
    <recommendedName>
        <fullName evidence="1">Uroporphyrinogen decarboxylase</fullName>
        <shortName evidence="1">UPD</shortName>
        <shortName evidence="1">URO-D</shortName>
        <ecNumber evidence="1">4.1.1.37</ecNumber>
    </recommendedName>
</protein>
<proteinExistence type="inferred from homology"/>
<accession>B8ZQX2</accession>
<reference key="1">
    <citation type="journal article" date="2009" name="Nat. Genet.">
        <title>Comparative genomic and phylogeographic analysis of Mycobacterium leprae.</title>
        <authorList>
            <person name="Monot M."/>
            <person name="Honore N."/>
            <person name="Garnier T."/>
            <person name="Zidane N."/>
            <person name="Sherafi D."/>
            <person name="Paniz-Mondolfi A."/>
            <person name="Matsuoka M."/>
            <person name="Taylor G.M."/>
            <person name="Donoghue H.D."/>
            <person name="Bouwman A."/>
            <person name="Mays S."/>
            <person name="Watson C."/>
            <person name="Lockwood D."/>
            <person name="Khamispour A."/>
            <person name="Dowlati Y."/>
            <person name="Jianping S."/>
            <person name="Rea T.H."/>
            <person name="Vera-Cabrera L."/>
            <person name="Stefani M.M."/>
            <person name="Banu S."/>
            <person name="Macdonald M."/>
            <person name="Sapkota B.R."/>
            <person name="Spencer J.S."/>
            <person name="Thomas J."/>
            <person name="Harshman K."/>
            <person name="Singh P."/>
            <person name="Busso P."/>
            <person name="Gattiker A."/>
            <person name="Rougemont J."/>
            <person name="Brennan P.J."/>
            <person name="Cole S.T."/>
        </authorList>
    </citation>
    <scope>NUCLEOTIDE SEQUENCE [LARGE SCALE GENOMIC DNA]</scope>
    <source>
        <strain>Br4923</strain>
    </source>
</reference>
<sequence>MSTRRELLESPYLAAVSGRKPCRVPVWFMRQAGRSLPEYRALRERYSMLAACFEPEVACEITLQPLRRYDVDAAILFSDIVVPLCAAGIDLDIVPDVGPVIGDPVRTATDIHAMKPLEPQAIQPIFQAISLLVAALGDVPLIGFAGAPFTLASYLVEGGPSRNHPRTKAMMLAEPASWHTLMDKLTDLTLGFLLGQIDAGVDAIQVFDSWAGTLSLSDYRQYVLPHSARIFATVAEHGVPMTHFGVGTADLLGAMSAAVRSGEKPGHQAVVGVDWRTSLTDAAARVEPCTALQGNLDPVVLLAGWPAVERVARTVVDDGRRAVVAGAAGHVFNLGHGVLPETDPGVLSELVSFIHSL</sequence>
<name>DCUP_MYCLB</name>
<keyword id="KW-0963">Cytoplasm</keyword>
<keyword id="KW-0210">Decarboxylase</keyword>
<keyword id="KW-0456">Lyase</keyword>
<keyword id="KW-0627">Porphyrin biosynthesis</keyword>
<feature type="chain" id="PRO_1000197530" description="Uroporphyrinogen decarboxylase">
    <location>
        <begin position="1"/>
        <end position="357"/>
    </location>
</feature>
<feature type="binding site" evidence="1">
    <location>
        <begin position="30"/>
        <end position="34"/>
    </location>
    <ligand>
        <name>substrate</name>
    </ligand>
</feature>
<feature type="binding site" evidence="1">
    <location>
        <position position="79"/>
    </location>
    <ligand>
        <name>substrate</name>
    </ligand>
</feature>
<feature type="binding site" evidence="1">
    <location>
        <position position="154"/>
    </location>
    <ligand>
        <name>substrate</name>
    </ligand>
</feature>
<feature type="binding site" evidence="1">
    <location>
        <position position="209"/>
    </location>
    <ligand>
        <name>substrate</name>
    </ligand>
</feature>
<feature type="binding site" evidence="1">
    <location>
        <position position="336"/>
    </location>
    <ligand>
        <name>substrate</name>
    </ligand>
</feature>
<feature type="site" description="Transition state stabilizer" evidence="1">
    <location>
        <position position="79"/>
    </location>
</feature>
<comment type="function">
    <text evidence="1">Catalyzes the decarboxylation of four acetate groups of uroporphyrinogen-III to yield coproporphyrinogen-III.</text>
</comment>
<comment type="catalytic activity">
    <reaction evidence="1">
        <text>uroporphyrinogen III + 4 H(+) = coproporphyrinogen III + 4 CO2</text>
        <dbReference type="Rhea" id="RHEA:19865"/>
        <dbReference type="ChEBI" id="CHEBI:15378"/>
        <dbReference type="ChEBI" id="CHEBI:16526"/>
        <dbReference type="ChEBI" id="CHEBI:57308"/>
        <dbReference type="ChEBI" id="CHEBI:57309"/>
        <dbReference type="EC" id="4.1.1.37"/>
    </reaction>
</comment>
<comment type="pathway">
    <text evidence="1">Porphyrin-containing compound metabolism; protoporphyrin-IX biosynthesis; coproporphyrinogen-III from 5-aminolevulinate: step 4/4.</text>
</comment>
<comment type="subunit">
    <text evidence="1">Homodimer.</text>
</comment>
<comment type="subcellular location">
    <subcellularLocation>
        <location evidence="1">Cytoplasm</location>
    </subcellularLocation>
</comment>
<comment type="similarity">
    <text evidence="1">Belongs to the uroporphyrinogen decarboxylase family.</text>
</comment>
<evidence type="ECO:0000255" key="1">
    <source>
        <dbReference type="HAMAP-Rule" id="MF_00218"/>
    </source>
</evidence>
<organism>
    <name type="scientific">Mycobacterium leprae (strain Br4923)</name>
    <dbReference type="NCBI Taxonomy" id="561304"/>
    <lineage>
        <taxon>Bacteria</taxon>
        <taxon>Bacillati</taxon>
        <taxon>Actinomycetota</taxon>
        <taxon>Actinomycetes</taxon>
        <taxon>Mycobacteriales</taxon>
        <taxon>Mycobacteriaceae</taxon>
        <taxon>Mycobacterium</taxon>
    </lineage>
</organism>
<gene>
    <name evidence="1" type="primary">hemE</name>
    <name type="ordered locus">MLBr01043</name>
</gene>